<protein>
    <recommendedName>
        <fullName>3-dehydroquinate dehydratase</fullName>
        <shortName>3-dehydroquinase</shortName>
        <ecNumber>4.2.1.10</ecNumber>
    </recommendedName>
    <alternativeName>
        <fullName>Type II DHQase</fullName>
    </alternativeName>
</protein>
<gene>
    <name type="primary">aroQ</name>
    <name type="ordered locus">SCO1961</name>
    <name type="ORF">SCC54.21c</name>
</gene>
<reference key="1">
    <citation type="submission" date="1997-09" db="EMBL/GenBank/DDBJ databases">
        <authorList>
            <person name="Hunter I.S."/>
        </authorList>
    </citation>
    <scope>NUCLEOTIDE SEQUENCE [GENOMIC DNA]</scope>
    <source>
        <strain>A3(2) / NRRL B-16638</strain>
    </source>
</reference>
<reference key="2">
    <citation type="journal article" date="2002" name="Nature">
        <title>Complete genome sequence of the model actinomycete Streptomyces coelicolor A3(2).</title>
        <authorList>
            <person name="Bentley S.D."/>
            <person name="Chater K.F."/>
            <person name="Cerdeno-Tarraga A.-M."/>
            <person name="Challis G.L."/>
            <person name="Thomson N.R."/>
            <person name="James K.D."/>
            <person name="Harris D.E."/>
            <person name="Quail M.A."/>
            <person name="Kieser H."/>
            <person name="Harper D."/>
            <person name="Bateman A."/>
            <person name="Brown S."/>
            <person name="Chandra G."/>
            <person name="Chen C.W."/>
            <person name="Collins M."/>
            <person name="Cronin A."/>
            <person name="Fraser A."/>
            <person name="Goble A."/>
            <person name="Hidalgo J."/>
            <person name="Hornsby T."/>
            <person name="Howarth S."/>
            <person name="Huang C.-H."/>
            <person name="Kieser T."/>
            <person name="Larke L."/>
            <person name="Murphy L.D."/>
            <person name="Oliver K."/>
            <person name="O'Neil S."/>
            <person name="Rabbinowitsch E."/>
            <person name="Rajandream M.A."/>
            <person name="Rutherford K.M."/>
            <person name="Rutter S."/>
            <person name="Seeger K."/>
            <person name="Saunders D."/>
            <person name="Sharp S."/>
            <person name="Squares R."/>
            <person name="Squares S."/>
            <person name="Taylor K."/>
            <person name="Warren T."/>
            <person name="Wietzorrek A."/>
            <person name="Woodward J.R."/>
            <person name="Barrell B.G."/>
            <person name="Parkhill J."/>
            <person name="Hopwood D.A."/>
        </authorList>
    </citation>
    <scope>NUCLEOTIDE SEQUENCE [LARGE SCALE GENOMIC DNA]</scope>
    <source>
        <strain>ATCC BAA-471 / A3(2) / M145</strain>
    </source>
</reference>
<reference key="3">
    <citation type="journal article" date="1990" name="Biochem. J.">
        <title>The purification and characterization of 3-dehydroquinase from Streptomyces coelicolor.</title>
        <authorList>
            <person name="White P.J."/>
            <person name="Young J."/>
            <person name="Hunter I.S."/>
            <person name="Nimmo J.G."/>
            <person name="Coggins J.R."/>
        </authorList>
    </citation>
    <scope>PROTEIN SEQUENCE OF 2-35</scope>
</reference>
<reference key="4">
    <citation type="journal article" date="1996" name="J. Biol. Chem.">
        <title>Localization of the active site of type II dehydroquinases. Identification of a common arginine-containing motif in the two classes of dehydroquinases.</title>
        <authorList>
            <person name="Krell T."/>
            <person name="Horsburgh M.J."/>
            <person name="Cooper A."/>
            <person name="Kelly S.M."/>
            <person name="Coggins J.R."/>
        </authorList>
    </citation>
    <scope>ENZYME KINETICS</scope>
    <scope>MUTAGENESIS OF ARG-24</scope>
</reference>
<reference key="5">
    <citation type="journal article" date="2002" name="Structure">
        <title>The structure and mechanism of the type II dehydroquinase from Streptomyces coelicolor.</title>
        <authorList>
            <person name="Roszak A.W."/>
            <person name="Robinson D.A."/>
            <person name="Krell T."/>
            <person name="Hunter I.S."/>
            <person name="Fredrickson M."/>
            <person name="Abell C."/>
            <person name="Coggins J.R."/>
            <person name="Lapthorn A.J."/>
        </authorList>
    </citation>
    <scope>X-RAY CRYSTALLOGRAPHY (1.8 ANGSTROMS) OF WILD-TYPE AND MUTANT ALA-24 IN COMPLEX WITH SUBSTRATE ANALOG</scope>
    <scope>SUBUNIT</scope>
</reference>
<reference key="6">
    <citation type="journal article" date="2004" name="Org. Biomol. Chem.">
        <title>(1R,4S,5R)-3-Fluoro-1,4,5-trihydroxy-2-cyclohexene-1-carboxylic acid: the fluoro analogue of the enolate intermediate in the reaction catalyzed by type II dehydroquinases.</title>
        <authorList>
            <person name="Frederickson M."/>
            <person name="Roszak A.W."/>
            <person name="Coggins J.R."/>
            <person name="Lapthorn A.J."/>
            <person name="Abell C."/>
        </authorList>
    </citation>
    <scope>X-RAY CRYSTALLOGRAPHY (2.2 ANGSTROMS) IN COMPLEX WITH SUBSTRATE ANALOG</scope>
    <scope>SUBUNIT</scope>
</reference>
<reference key="7">
    <citation type="journal article" date="2005" name="Org. Biomol. Chem.">
        <title>Rational design of new bifunctional inhibitors of type II dehydroquinase.</title>
        <authorList>
            <person name="Toscano M.D."/>
            <person name="Stewart K.A."/>
            <person name="Coggins J.R."/>
            <person name="Lapthorn A.J."/>
            <person name="Abell C."/>
        </authorList>
    </citation>
    <scope>X-RAY CRYSTALLOGRAPHY (1.7 ANGSTROMS) IN COMPLEX WITH SUBSTRATE ANALOG</scope>
    <scope>SUBUNIT</scope>
</reference>
<accession>P15474</accession>
<accession>O33608</accession>
<name>AROQ_STRCO</name>
<keyword id="KW-0002">3D-structure</keyword>
<keyword id="KW-0028">Amino-acid biosynthesis</keyword>
<keyword id="KW-0057">Aromatic amino acid biosynthesis</keyword>
<keyword id="KW-0903">Direct protein sequencing</keyword>
<keyword id="KW-0456">Lyase</keyword>
<keyword id="KW-1185">Reference proteome</keyword>
<organism>
    <name type="scientific">Streptomyces coelicolor (strain ATCC BAA-471 / A3(2) / M145)</name>
    <dbReference type="NCBI Taxonomy" id="100226"/>
    <lineage>
        <taxon>Bacteria</taxon>
        <taxon>Bacillati</taxon>
        <taxon>Actinomycetota</taxon>
        <taxon>Actinomycetes</taxon>
        <taxon>Kitasatosporales</taxon>
        <taxon>Streptomycetaceae</taxon>
        <taxon>Streptomyces</taxon>
        <taxon>Streptomyces albidoflavus group</taxon>
    </lineage>
</organism>
<dbReference type="EC" id="4.2.1.10"/>
<dbReference type="EMBL" id="AJ001493">
    <property type="protein sequence ID" value="CAA04787.1"/>
    <property type="molecule type" value="Genomic_DNA"/>
</dbReference>
<dbReference type="EMBL" id="AL939110">
    <property type="protein sequence ID" value="CAB38151.1"/>
    <property type="molecule type" value="Genomic_DNA"/>
</dbReference>
<dbReference type="PIR" id="S08196">
    <property type="entry name" value="S08196"/>
</dbReference>
<dbReference type="PIR" id="T35990">
    <property type="entry name" value="T35990"/>
</dbReference>
<dbReference type="RefSeq" id="NP_626225.1">
    <property type="nucleotide sequence ID" value="NC_003888.3"/>
</dbReference>
<dbReference type="RefSeq" id="WP_003976858.1">
    <property type="nucleotide sequence ID" value="NZ_VNID01000001.1"/>
</dbReference>
<dbReference type="PDB" id="1D0I">
    <property type="method" value="X-ray"/>
    <property type="resolution" value="1.80 A"/>
    <property type="chains" value="A/B/C/D/E/F/G/H/I/J/K/L=2-157"/>
</dbReference>
<dbReference type="PDB" id="1GTZ">
    <property type="method" value="X-ray"/>
    <property type="resolution" value="1.60 A"/>
    <property type="chains" value="A/B/C/D/E/F/G/H/I/J/K/L=2-157"/>
</dbReference>
<dbReference type="PDB" id="1GU0">
    <property type="method" value="X-ray"/>
    <property type="resolution" value="2.00 A"/>
    <property type="chains" value="A/B/C/D/E/F/G/H/I/J/K/L=2-157"/>
</dbReference>
<dbReference type="PDB" id="1GU1">
    <property type="method" value="X-ray"/>
    <property type="resolution" value="1.80 A"/>
    <property type="chains" value="A/B/C/D/E/F/G/H/I/J/K/L=2-157"/>
</dbReference>
<dbReference type="PDB" id="1V1J">
    <property type="method" value="X-ray"/>
    <property type="resolution" value="2.20 A"/>
    <property type="chains" value="A/B/C/D/E/F/G/H/I/J/K/L=2-157"/>
</dbReference>
<dbReference type="PDB" id="2BT4">
    <property type="method" value="X-ray"/>
    <property type="resolution" value="1.70 A"/>
    <property type="chains" value="A/B/C/D/E/F/G/H/I/J/K/L=1-157"/>
</dbReference>
<dbReference type="PDB" id="2CJF">
    <property type="method" value="X-ray"/>
    <property type="resolution" value="1.95 A"/>
    <property type="chains" value="A/B/C/D/E/F/G/H/I/J/K/L=1-157"/>
</dbReference>
<dbReference type="PDBsum" id="1D0I"/>
<dbReference type="PDBsum" id="1GTZ"/>
<dbReference type="PDBsum" id="1GU0"/>
<dbReference type="PDBsum" id="1GU1"/>
<dbReference type="PDBsum" id="1V1J"/>
<dbReference type="PDBsum" id="2BT4"/>
<dbReference type="PDBsum" id="2CJF"/>
<dbReference type="SMR" id="P15474"/>
<dbReference type="FunCoup" id="P15474">
    <property type="interactions" value="112"/>
</dbReference>
<dbReference type="STRING" id="100226.gene:17759558"/>
<dbReference type="BindingDB" id="P15474"/>
<dbReference type="ChEMBL" id="CHEMBL5276"/>
<dbReference type="DrugBank" id="DB08485">
    <property type="generic name" value="(1S,4S,5S)-1,4,5-TRIHYDROXY-3-[3-(PHENYLTHIO)PHENYL]CYCLOHEX-2-ENE-1-CARBOXYLIC ACID"/>
</dbReference>
<dbReference type="DrugBank" id="DB04656">
    <property type="generic name" value="1,3,4-TRIHYDROXY-5-(3-PHENOXYPROPYL)-CYCLOHEXANE-1-CARBOXYLIC A CID"/>
</dbReference>
<dbReference type="DrugBank" id="DB02801">
    <property type="generic name" value="2,3-Anhydro-quinic acid"/>
</dbReference>
<dbReference type="DrugBank" id="DB02786">
    <property type="generic name" value="2-Anhydro-3-Fluoro-Quinic Acid"/>
</dbReference>
<dbReference type="DrugBank" id="DB04347">
    <property type="generic name" value="3-Dehydroshikimate"/>
</dbReference>
<dbReference type="DrugCentral" id="P15474"/>
<dbReference type="PaxDb" id="100226-SCO1961"/>
<dbReference type="GeneID" id="96651184"/>
<dbReference type="KEGG" id="sco:SCO1961"/>
<dbReference type="PATRIC" id="fig|100226.15.peg.1987"/>
<dbReference type="eggNOG" id="COG0757">
    <property type="taxonomic scope" value="Bacteria"/>
</dbReference>
<dbReference type="HOGENOM" id="CLU_090968_2_0_11"/>
<dbReference type="InParanoid" id="P15474"/>
<dbReference type="OrthoDB" id="9790793at2"/>
<dbReference type="PhylomeDB" id="P15474"/>
<dbReference type="BRENDA" id="4.2.1.10">
    <property type="organism ID" value="5998"/>
</dbReference>
<dbReference type="SABIO-RK" id="P15474"/>
<dbReference type="UniPathway" id="UPA00053">
    <property type="reaction ID" value="UER00086"/>
</dbReference>
<dbReference type="EvolutionaryTrace" id="P15474"/>
<dbReference type="PRO" id="PR:P15474"/>
<dbReference type="Proteomes" id="UP000001973">
    <property type="component" value="Chromosome"/>
</dbReference>
<dbReference type="GO" id="GO:0003855">
    <property type="term" value="F:3-dehydroquinate dehydratase activity"/>
    <property type="evidence" value="ECO:0000318"/>
    <property type="project" value="GO_Central"/>
</dbReference>
<dbReference type="GO" id="GO:0008652">
    <property type="term" value="P:amino acid biosynthetic process"/>
    <property type="evidence" value="ECO:0007669"/>
    <property type="project" value="UniProtKB-KW"/>
</dbReference>
<dbReference type="GO" id="GO:0009073">
    <property type="term" value="P:aromatic amino acid family biosynthetic process"/>
    <property type="evidence" value="ECO:0007669"/>
    <property type="project" value="UniProtKB-KW"/>
</dbReference>
<dbReference type="GO" id="GO:0009423">
    <property type="term" value="P:chorismate biosynthetic process"/>
    <property type="evidence" value="ECO:0007669"/>
    <property type="project" value="UniProtKB-UniRule"/>
</dbReference>
<dbReference type="GO" id="GO:0019631">
    <property type="term" value="P:quinate catabolic process"/>
    <property type="evidence" value="ECO:0000318"/>
    <property type="project" value="GO_Central"/>
</dbReference>
<dbReference type="CDD" id="cd00466">
    <property type="entry name" value="DHQase_II"/>
    <property type="match status" value="1"/>
</dbReference>
<dbReference type="Gene3D" id="3.40.50.9100">
    <property type="entry name" value="Dehydroquinase, class II"/>
    <property type="match status" value="1"/>
</dbReference>
<dbReference type="HAMAP" id="MF_00169">
    <property type="entry name" value="AroQ"/>
    <property type="match status" value="1"/>
</dbReference>
<dbReference type="InterPro" id="IPR001874">
    <property type="entry name" value="DHquinase_II"/>
</dbReference>
<dbReference type="InterPro" id="IPR018509">
    <property type="entry name" value="DHquinase_II_CS"/>
</dbReference>
<dbReference type="InterPro" id="IPR036441">
    <property type="entry name" value="DHquinase_II_sf"/>
</dbReference>
<dbReference type="NCBIfam" id="TIGR01088">
    <property type="entry name" value="aroQ"/>
    <property type="match status" value="1"/>
</dbReference>
<dbReference type="NCBIfam" id="NF003805">
    <property type="entry name" value="PRK05395.1-2"/>
    <property type="match status" value="1"/>
</dbReference>
<dbReference type="NCBIfam" id="NF003806">
    <property type="entry name" value="PRK05395.1-3"/>
    <property type="match status" value="1"/>
</dbReference>
<dbReference type="NCBIfam" id="NF003807">
    <property type="entry name" value="PRK05395.1-4"/>
    <property type="match status" value="1"/>
</dbReference>
<dbReference type="PANTHER" id="PTHR21272">
    <property type="entry name" value="CATABOLIC 3-DEHYDROQUINASE"/>
    <property type="match status" value="1"/>
</dbReference>
<dbReference type="PANTHER" id="PTHR21272:SF3">
    <property type="entry name" value="CATABOLIC 3-DEHYDROQUINASE"/>
    <property type="match status" value="1"/>
</dbReference>
<dbReference type="Pfam" id="PF01220">
    <property type="entry name" value="DHquinase_II"/>
    <property type="match status" value="1"/>
</dbReference>
<dbReference type="PIRSF" id="PIRSF001399">
    <property type="entry name" value="DHquinase_II"/>
    <property type="match status" value="1"/>
</dbReference>
<dbReference type="SUPFAM" id="SSF52304">
    <property type="entry name" value="Type II 3-dehydroquinate dehydratase"/>
    <property type="match status" value="1"/>
</dbReference>
<dbReference type="PROSITE" id="PS01029">
    <property type="entry name" value="DEHYDROQUINASE_II"/>
    <property type="match status" value="1"/>
</dbReference>
<sequence length="157" mass="16682">MPRSLANAPIMILNGPNLNLLGQRQPEIYGSDTLADVEALCVKAAAAHGGTVDFRQSNHEGELVDWIHEARLNHCGIVINPAAYSHTSVAILDALNTCDGLPVVEVHISNIHQREPFRHHSYVSQRADGVVAGCGVQGYVFGVERIAALAGAGSARA</sequence>
<feature type="initiator methionine" description="Removed" evidence="5">
    <location>
        <position position="1"/>
    </location>
</feature>
<feature type="chain" id="PRO_0000159930" description="3-dehydroquinate dehydratase">
    <location>
        <begin position="2"/>
        <end position="157"/>
    </location>
</feature>
<feature type="active site" description="Proton acceptor">
    <location>
        <position position="29"/>
    </location>
</feature>
<feature type="active site" description="Proton donor">
    <location>
        <position position="107"/>
    </location>
</feature>
<feature type="binding site">
    <location>
        <position position="80"/>
    </location>
    <ligand>
        <name>substrate</name>
    </ligand>
</feature>
<feature type="binding site">
    <location>
        <position position="86"/>
    </location>
    <ligand>
        <name>substrate</name>
    </ligand>
</feature>
<feature type="binding site">
    <location>
        <position position="93"/>
    </location>
    <ligand>
        <name>substrate</name>
    </ligand>
</feature>
<feature type="binding site">
    <location>
        <begin position="108"/>
        <end position="109"/>
    </location>
    <ligand>
        <name>substrate</name>
    </ligand>
</feature>
<feature type="binding site">
    <location>
        <position position="118"/>
    </location>
    <ligand>
        <name>substrate</name>
    </ligand>
</feature>
<feature type="site" description="Transition state stabilizer">
    <location>
        <position position="24"/>
    </location>
</feature>
<feature type="mutagenesis site" description="Reduces kcat 30000-fold. Reduces KM for 3-dehydroquinate 6-fold." evidence="6">
    <original>R</original>
    <variation>A</variation>
    <location>
        <position position="24"/>
    </location>
</feature>
<feature type="mutagenesis site" description="Reduces kcat 2700-fold. Reduces KM for 3-dehydroquinate 4-fold." evidence="6">
    <original>R</original>
    <variation>K</variation>
    <location>
        <position position="24"/>
    </location>
</feature>
<feature type="mutagenesis site" description="Reduces kcat 3100-fold. Reduces KM for 3-dehydroquinate 8-fold." evidence="6">
    <original>R</original>
    <variation>Q</variation>
    <location>
        <position position="24"/>
    </location>
</feature>
<feature type="turn" evidence="8">
    <location>
        <begin position="5"/>
        <end position="7"/>
    </location>
</feature>
<feature type="strand" evidence="8">
    <location>
        <begin position="10"/>
        <end position="14"/>
    </location>
</feature>
<feature type="helix" evidence="8">
    <location>
        <begin position="18"/>
        <end position="20"/>
    </location>
</feature>
<feature type="turn" evidence="8">
    <location>
        <begin position="21"/>
        <end position="23"/>
    </location>
</feature>
<feature type="helix" evidence="8">
    <location>
        <begin position="26"/>
        <end position="29"/>
    </location>
</feature>
<feature type="helix" evidence="8">
    <location>
        <begin position="34"/>
        <end position="46"/>
    </location>
</feature>
<feature type="turn" evidence="8">
    <location>
        <begin position="47"/>
        <end position="49"/>
    </location>
</feature>
<feature type="strand" evidence="8">
    <location>
        <begin position="52"/>
        <end position="56"/>
    </location>
</feature>
<feature type="helix" evidence="8">
    <location>
        <begin position="60"/>
        <end position="73"/>
    </location>
</feature>
<feature type="strand" evidence="8">
    <location>
        <begin position="75"/>
        <end position="80"/>
    </location>
</feature>
<feature type="helix" evidence="8">
    <location>
        <begin position="84"/>
        <end position="87"/>
    </location>
</feature>
<feature type="helix" evidence="8">
    <location>
        <begin position="89"/>
        <end position="96"/>
    </location>
</feature>
<feature type="strand" evidence="8">
    <location>
        <begin position="103"/>
        <end position="109"/>
    </location>
</feature>
<feature type="helix" evidence="8">
    <location>
        <begin position="111"/>
        <end position="113"/>
    </location>
</feature>
<feature type="helix" evidence="8">
    <location>
        <begin position="116"/>
        <end position="118"/>
    </location>
</feature>
<feature type="helix" evidence="8">
    <location>
        <begin position="123"/>
        <end position="125"/>
    </location>
</feature>
<feature type="strand" evidence="8">
    <location>
        <begin position="128"/>
        <end position="134"/>
    </location>
</feature>
<feature type="helix" evidence="8">
    <location>
        <begin position="137"/>
        <end position="150"/>
    </location>
</feature>
<comment type="function">
    <text evidence="1">Catalyzes a trans-dehydration via an enolate intermediate.</text>
</comment>
<comment type="catalytic activity">
    <reaction>
        <text>3-dehydroquinate = 3-dehydroshikimate + H2O</text>
        <dbReference type="Rhea" id="RHEA:21096"/>
        <dbReference type="ChEBI" id="CHEBI:15377"/>
        <dbReference type="ChEBI" id="CHEBI:16630"/>
        <dbReference type="ChEBI" id="CHEBI:32364"/>
        <dbReference type="EC" id="4.2.1.10"/>
    </reaction>
</comment>
<comment type="biophysicochemical properties">
    <kinetics>
        <KM>1100 uM for 3-dehydroquinate (at pH 8 and 25 degrees Celsius)</KM>
    </kinetics>
</comment>
<comment type="pathway">
    <text>Metabolic intermediate biosynthesis; chorismate biosynthesis; chorismate from D-erythrose 4-phosphate and phosphoenolpyruvate: step 3/7.</text>
</comment>
<comment type="subunit">
    <text evidence="2 3 4">Homododecamer.</text>
</comment>
<comment type="similarity">
    <text evidence="7">Belongs to the type-II 3-dehydroquinase family.</text>
</comment>
<proteinExistence type="evidence at protein level"/>
<evidence type="ECO:0000250" key="1"/>
<evidence type="ECO:0000269" key="2">
    <source>
    </source>
</evidence>
<evidence type="ECO:0000269" key="3">
    <source>
    </source>
</evidence>
<evidence type="ECO:0000269" key="4">
    <source>
    </source>
</evidence>
<evidence type="ECO:0000269" key="5">
    <source>
    </source>
</evidence>
<evidence type="ECO:0000269" key="6">
    <source>
    </source>
</evidence>
<evidence type="ECO:0000305" key="7"/>
<evidence type="ECO:0007829" key="8">
    <source>
        <dbReference type="PDB" id="1GTZ"/>
    </source>
</evidence>